<keyword id="KW-0378">Hydrolase</keyword>
<keyword id="KW-1185">Reference proteome</keyword>
<protein>
    <recommendedName>
        <fullName evidence="1">Bis(5'-nucleosyl)-tetraphosphatase, symmetrical</fullName>
        <ecNumber evidence="1">3.6.1.41</ecNumber>
    </recommendedName>
    <alternativeName>
        <fullName evidence="1">Ap4A hydrolase</fullName>
    </alternativeName>
    <alternativeName>
        <fullName evidence="1">Diadenosine 5',5'''-P1,P4-tetraphosphate pyrophosphohydrolase</fullName>
    </alternativeName>
    <alternativeName>
        <fullName evidence="1">Diadenosine tetraphosphatase</fullName>
    </alternativeName>
</protein>
<comment type="function">
    <text evidence="1">Hydrolyzes diadenosine 5',5'''-P1,P4-tetraphosphate to yield ADP.</text>
</comment>
<comment type="catalytic activity">
    <reaction evidence="1">
        <text>P(1),P(4)-bis(5'-adenosyl) tetraphosphate + H2O = 2 ADP + 2 H(+)</text>
        <dbReference type="Rhea" id="RHEA:24252"/>
        <dbReference type="ChEBI" id="CHEBI:15377"/>
        <dbReference type="ChEBI" id="CHEBI:15378"/>
        <dbReference type="ChEBI" id="CHEBI:58141"/>
        <dbReference type="ChEBI" id="CHEBI:456216"/>
        <dbReference type="EC" id="3.6.1.41"/>
    </reaction>
</comment>
<comment type="similarity">
    <text evidence="1">Belongs to the Ap4A hydrolase family.</text>
</comment>
<dbReference type="EC" id="3.6.1.41" evidence="1"/>
<dbReference type="EMBL" id="CP000020">
    <property type="protein sequence ID" value="AAW84780.1"/>
    <property type="molecule type" value="Genomic_DNA"/>
</dbReference>
<dbReference type="RefSeq" id="WP_011261098.1">
    <property type="nucleotide sequence ID" value="NC_006840.2"/>
</dbReference>
<dbReference type="RefSeq" id="YP_203668.1">
    <property type="nucleotide sequence ID" value="NC_006840.2"/>
</dbReference>
<dbReference type="SMR" id="Q5E866"/>
<dbReference type="STRING" id="312309.VF_0285"/>
<dbReference type="EnsemblBacteria" id="AAW84780">
    <property type="protein sequence ID" value="AAW84780"/>
    <property type="gene ID" value="VF_0285"/>
</dbReference>
<dbReference type="GeneID" id="54162905"/>
<dbReference type="KEGG" id="vfi:VF_0285"/>
<dbReference type="PATRIC" id="fig|312309.11.peg.279"/>
<dbReference type="eggNOG" id="COG0639">
    <property type="taxonomic scope" value="Bacteria"/>
</dbReference>
<dbReference type="HOGENOM" id="CLU_056184_2_0_6"/>
<dbReference type="OrthoDB" id="9807890at2"/>
<dbReference type="Proteomes" id="UP000000537">
    <property type="component" value="Chromosome I"/>
</dbReference>
<dbReference type="GO" id="GO:0008803">
    <property type="term" value="F:bis(5'-nucleosyl)-tetraphosphatase (symmetrical) activity"/>
    <property type="evidence" value="ECO:0007669"/>
    <property type="project" value="UniProtKB-UniRule"/>
</dbReference>
<dbReference type="CDD" id="cd07422">
    <property type="entry name" value="MPP_ApaH"/>
    <property type="match status" value="1"/>
</dbReference>
<dbReference type="Gene3D" id="3.60.21.10">
    <property type="match status" value="1"/>
</dbReference>
<dbReference type="HAMAP" id="MF_00199">
    <property type="entry name" value="ApaH"/>
    <property type="match status" value="1"/>
</dbReference>
<dbReference type="InterPro" id="IPR004617">
    <property type="entry name" value="ApaH"/>
</dbReference>
<dbReference type="InterPro" id="IPR004843">
    <property type="entry name" value="Calcineurin-like_PHP_ApaH"/>
</dbReference>
<dbReference type="InterPro" id="IPR029052">
    <property type="entry name" value="Metallo-depent_PP-like"/>
</dbReference>
<dbReference type="NCBIfam" id="TIGR00668">
    <property type="entry name" value="apaH"/>
    <property type="match status" value="1"/>
</dbReference>
<dbReference type="NCBIfam" id="NF001204">
    <property type="entry name" value="PRK00166.1"/>
    <property type="match status" value="1"/>
</dbReference>
<dbReference type="PANTHER" id="PTHR40942">
    <property type="match status" value="1"/>
</dbReference>
<dbReference type="PANTHER" id="PTHR40942:SF4">
    <property type="entry name" value="CYTOCHROME C5"/>
    <property type="match status" value="1"/>
</dbReference>
<dbReference type="Pfam" id="PF00149">
    <property type="entry name" value="Metallophos"/>
    <property type="match status" value="1"/>
</dbReference>
<dbReference type="PIRSF" id="PIRSF000903">
    <property type="entry name" value="B5n-ttraPtase_sm"/>
    <property type="match status" value="1"/>
</dbReference>
<dbReference type="SUPFAM" id="SSF56300">
    <property type="entry name" value="Metallo-dependent phosphatases"/>
    <property type="match status" value="1"/>
</dbReference>
<proteinExistence type="inferred from homology"/>
<feature type="chain" id="PRO_1000012103" description="Bis(5'-nucleosyl)-tetraphosphatase, symmetrical">
    <location>
        <begin position="1"/>
        <end position="271"/>
    </location>
</feature>
<evidence type="ECO:0000255" key="1">
    <source>
        <dbReference type="HAMAP-Rule" id="MF_00199"/>
    </source>
</evidence>
<reference key="1">
    <citation type="journal article" date="2005" name="Proc. Natl. Acad. Sci. U.S.A.">
        <title>Complete genome sequence of Vibrio fischeri: a symbiotic bacterium with pathogenic congeners.</title>
        <authorList>
            <person name="Ruby E.G."/>
            <person name="Urbanowski M."/>
            <person name="Campbell J."/>
            <person name="Dunn A."/>
            <person name="Faini M."/>
            <person name="Gunsalus R."/>
            <person name="Lostroh P."/>
            <person name="Lupp C."/>
            <person name="McCann J."/>
            <person name="Millikan D."/>
            <person name="Schaefer A."/>
            <person name="Stabb E."/>
            <person name="Stevens A."/>
            <person name="Visick K."/>
            <person name="Whistler C."/>
            <person name="Greenberg E.P."/>
        </authorList>
    </citation>
    <scope>NUCLEOTIDE SEQUENCE [LARGE SCALE GENOMIC DNA]</scope>
    <source>
        <strain>ATCC 700601 / ES114</strain>
    </source>
</reference>
<gene>
    <name evidence="1" type="primary">apaH</name>
    <name type="ordered locus">VF_0285</name>
</gene>
<name>APAH_ALIF1</name>
<organism>
    <name type="scientific">Aliivibrio fischeri (strain ATCC 700601 / ES114)</name>
    <name type="common">Vibrio fischeri</name>
    <dbReference type="NCBI Taxonomy" id="312309"/>
    <lineage>
        <taxon>Bacteria</taxon>
        <taxon>Pseudomonadati</taxon>
        <taxon>Pseudomonadota</taxon>
        <taxon>Gammaproteobacteria</taxon>
        <taxon>Vibrionales</taxon>
        <taxon>Vibrionaceae</taxon>
        <taxon>Aliivibrio</taxon>
    </lineage>
</organism>
<accession>Q5E866</accession>
<sequence>MATYFVGDIQGCLDELLLLLERVEFNREKDQLWLTGDLVARGPKSLETLRFVKSLGNAAVTILGNHDLHLLAVSQGISRVKEKDKTAPIFTAPDSEELLTWLRHQPLLAVHSEYDIVMTHAGISPQWNMATAIDCAREVESVLLSDKWVLLLENMYENYPDTWDVTLSGIDRYRYIINAFTRMRFCHLDGRLDMECKLPPQDINSDELVPWFELENRLPLSHKVIFGHWAALMGHDGNNVIALDTGCVWGEYMTMYRVDDGKYFTQKAIEQ</sequence>